<keyword id="KW-0349">Heme</keyword>
<keyword id="KW-0408">Iron</keyword>
<keyword id="KW-0409">Iron storage</keyword>
<keyword id="KW-0479">Metal-binding</keyword>
<keyword id="KW-0560">Oxidoreductase</keyword>
<keyword id="KW-1185">Reference proteome</keyword>
<feature type="chain" id="PRO_0000192594" description="Bacterioferritin">
    <location>
        <begin position="1"/>
        <end position="158"/>
    </location>
</feature>
<feature type="domain" description="Ferritin-like diiron" evidence="3">
    <location>
        <begin position="1"/>
        <end position="145"/>
    </location>
</feature>
<feature type="binding site" evidence="3">
    <location>
        <position position="18"/>
    </location>
    <ligand>
        <name>Fe cation</name>
        <dbReference type="ChEBI" id="CHEBI:24875"/>
        <label>1</label>
    </ligand>
</feature>
<feature type="binding site" evidence="3">
    <location>
        <position position="51"/>
    </location>
    <ligand>
        <name>Fe cation</name>
        <dbReference type="ChEBI" id="CHEBI:24875"/>
        <label>1</label>
    </ligand>
</feature>
<feature type="binding site" evidence="3">
    <location>
        <position position="51"/>
    </location>
    <ligand>
        <name>Fe cation</name>
        <dbReference type="ChEBI" id="CHEBI:24875"/>
        <label>2</label>
    </ligand>
</feature>
<feature type="binding site" description="axial binding residue" evidence="3">
    <location>
        <position position="52"/>
    </location>
    <ligand>
        <name>heme b</name>
        <dbReference type="ChEBI" id="CHEBI:60344"/>
        <note>ligand shared between dimeric partners</note>
    </ligand>
    <ligandPart>
        <name>Fe</name>
        <dbReference type="ChEBI" id="CHEBI:18248"/>
    </ligandPart>
</feature>
<feature type="binding site" evidence="3">
    <location>
        <position position="54"/>
    </location>
    <ligand>
        <name>Fe cation</name>
        <dbReference type="ChEBI" id="CHEBI:24875"/>
        <label>1</label>
    </ligand>
</feature>
<feature type="binding site" evidence="3">
    <location>
        <position position="94"/>
    </location>
    <ligand>
        <name>Fe cation</name>
        <dbReference type="ChEBI" id="CHEBI:24875"/>
        <label>2</label>
    </ligand>
</feature>
<feature type="binding site" evidence="3">
    <location>
        <position position="127"/>
    </location>
    <ligand>
        <name>Fe cation</name>
        <dbReference type="ChEBI" id="CHEBI:24875"/>
        <label>1</label>
    </ligand>
</feature>
<feature type="binding site" evidence="3">
    <location>
        <position position="127"/>
    </location>
    <ligand>
        <name>Fe cation</name>
        <dbReference type="ChEBI" id="CHEBI:24875"/>
        <label>2</label>
    </ligand>
</feature>
<feature type="binding site" evidence="3">
    <location>
        <position position="130"/>
    </location>
    <ligand>
        <name>Fe cation</name>
        <dbReference type="ChEBI" id="CHEBI:24875"/>
        <label>2</label>
    </ligand>
</feature>
<gene>
    <name type="primary">bfr</name>
    <name type="ordered locus">STM3443</name>
</gene>
<name>BFR_SALTY</name>
<accession>O68926</accession>
<evidence type="ECO:0000250" key="1"/>
<evidence type="ECO:0000250" key="2">
    <source>
        <dbReference type="UniProtKB" id="Q9HWF9"/>
    </source>
</evidence>
<evidence type="ECO:0000255" key="3">
    <source>
        <dbReference type="PROSITE-ProRule" id="PRU00085"/>
    </source>
</evidence>
<evidence type="ECO:0000305" key="4"/>
<proteinExistence type="inferred from homology"/>
<protein>
    <recommendedName>
        <fullName>Bacterioferritin</fullName>
        <shortName>BFR</shortName>
        <ecNumber>1.16.3.1</ecNumber>
    </recommendedName>
    <alternativeName>
        <fullName>Cytochrome b-1</fullName>
    </alternativeName>
    <alternativeName>
        <fullName>Cytochrome b-557</fullName>
    </alternativeName>
</protein>
<dbReference type="EC" id="1.16.3.1"/>
<dbReference type="EMBL" id="AF058449">
    <property type="protein sequence ID" value="AAC14283.1"/>
    <property type="molecule type" value="Genomic_DNA"/>
</dbReference>
<dbReference type="EMBL" id="AE006468">
    <property type="protein sequence ID" value="AAL22306.1"/>
    <property type="molecule type" value="Genomic_DNA"/>
</dbReference>
<dbReference type="RefSeq" id="NP_462347.1">
    <property type="nucleotide sequence ID" value="NC_003197.2"/>
</dbReference>
<dbReference type="RefSeq" id="WP_000675530.1">
    <property type="nucleotide sequence ID" value="NC_003197.2"/>
</dbReference>
<dbReference type="SMR" id="O68926"/>
<dbReference type="STRING" id="99287.STM3443"/>
<dbReference type="PaxDb" id="99287-STM3443"/>
<dbReference type="GeneID" id="1254966"/>
<dbReference type="GeneID" id="66757778"/>
<dbReference type="KEGG" id="stm:STM3443"/>
<dbReference type="PATRIC" id="fig|99287.12.peg.3640"/>
<dbReference type="HOGENOM" id="CLU_104506_2_0_6"/>
<dbReference type="OMA" id="YQRLFHV"/>
<dbReference type="PhylomeDB" id="O68926"/>
<dbReference type="BioCyc" id="SENT99287:STM3443-MONOMER"/>
<dbReference type="Proteomes" id="UP000001014">
    <property type="component" value="Chromosome"/>
</dbReference>
<dbReference type="GO" id="GO:0005829">
    <property type="term" value="C:cytosol"/>
    <property type="evidence" value="ECO:0000318"/>
    <property type="project" value="GO_Central"/>
</dbReference>
<dbReference type="GO" id="GO:0008199">
    <property type="term" value="F:ferric iron binding"/>
    <property type="evidence" value="ECO:0007669"/>
    <property type="project" value="InterPro"/>
</dbReference>
<dbReference type="GO" id="GO:0004322">
    <property type="term" value="F:ferroxidase activity"/>
    <property type="evidence" value="ECO:0000318"/>
    <property type="project" value="GO_Central"/>
</dbReference>
<dbReference type="GO" id="GO:0020037">
    <property type="term" value="F:heme binding"/>
    <property type="evidence" value="ECO:0000318"/>
    <property type="project" value="GO_Central"/>
</dbReference>
<dbReference type="GO" id="GO:0005506">
    <property type="term" value="F:iron ion binding"/>
    <property type="evidence" value="ECO:0000318"/>
    <property type="project" value="GO_Central"/>
</dbReference>
<dbReference type="GO" id="GO:0006879">
    <property type="term" value="P:intracellular iron ion homeostasis"/>
    <property type="evidence" value="ECO:0007669"/>
    <property type="project" value="UniProtKB-KW"/>
</dbReference>
<dbReference type="GO" id="GO:0006826">
    <property type="term" value="P:iron ion transport"/>
    <property type="evidence" value="ECO:0007669"/>
    <property type="project" value="InterPro"/>
</dbReference>
<dbReference type="CDD" id="cd00907">
    <property type="entry name" value="Bacterioferritin"/>
    <property type="match status" value="1"/>
</dbReference>
<dbReference type="FunFam" id="1.20.1260.10:FF:000005">
    <property type="entry name" value="Bacterioferritin"/>
    <property type="match status" value="1"/>
</dbReference>
<dbReference type="Gene3D" id="1.20.1260.10">
    <property type="match status" value="1"/>
</dbReference>
<dbReference type="InterPro" id="IPR002024">
    <property type="entry name" value="Bacterioferritin"/>
</dbReference>
<dbReference type="InterPro" id="IPR012347">
    <property type="entry name" value="Ferritin-like"/>
</dbReference>
<dbReference type="InterPro" id="IPR009040">
    <property type="entry name" value="Ferritin-like_diiron"/>
</dbReference>
<dbReference type="InterPro" id="IPR009078">
    <property type="entry name" value="Ferritin-like_SF"/>
</dbReference>
<dbReference type="InterPro" id="IPR008331">
    <property type="entry name" value="Ferritin_DPS_dom"/>
</dbReference>
<dbReference type="NCBIfam" id="TIGR00754">
    <property type="entry name" value="bfr"/>
    <property type="match status" value="1"/>
</dbReference>
<dbReference type="PANTHER" id="PTHR30295">
    <property type="entry name" value="BACTERIOFERRITIN"/>
    <property type="match status" value="1"/>
</dbReference>
<dbReference type="PANTHER" id="PTHR30295:SF0">
    <property type="entry name" value="BACTERIOFERRITIN"/>
    <property type="match status" value="1"/>
</dbReference>
<dbReference type="Pfam" id="PF00210">
    <property type="entry name" value="Ferritin"/>
    <property type="match status" value="1"/>
</dbReference>
<dbReference type="PIRSF" id="PIRSF002560">
    <property type="entry name" value="Bacterioferritin"/>
    <property type="match status" value="1"/>
</dbReference>
<dbReference type="PRINTS" id="PR00601">
    <property type="entry name" value="BACFERRITIN"/>
</dbReference>
<dbReference type="SUPFAM" id="SSF47240">
    <property type="entry name" value="Ferritin-like"/>
    <property type="match status" value="1"/>
</dbReference>
<dbReference type="PROSITE" id="PS00549">
    <property type="entry name" value="BACTERIOFERRITIN"/>
    <property type="match status" value="1"/>
</dbReference>
<dbReference type="PROSITE" id="PS50905">
    <property type="entry name" value="FERRITIN_LIKE"/>
    <property type="match status" value="1"/>
</dbReference>
<comment type="function">
    <text evidence="1">Iron-storage protein, whose ferroxidase center binds Fe(2+), oxidizes it using dioxygen to Fe(3+), and participates in the subsequent Fe(3+) oxide mineral core formation within the central cavity of the BFR protein shell.</text>
</comment>
<comment type="catalytic activity">
    <reaction>
        <text>4 Fe(2+) + O2 + 4 H(+) = 4 Fe(3+) + 2 H2O</text>
        <dbReference type="Rhea" id="RHEA:11148"/>
        <dbReference type="ChEBI" id="CHEBI:15377"/>
        <dbReference type="ChEBI" id="CHEBI:15378"/>
        <dbReference type="ChEBI" id="CHEBI:15379"/>
        <dbReference type="ChEBI" id="CHEBI:29033"/>
        <dbReference type="ChEBI" id="CHEBI:29034"/>
        <dbReference type="EC" id="1.16.3.1"/>
    </reaction>
</comment>
<comment type="catalytic activity">
    <reaction evidence="2">
        <text>Fe(2+)(in) = Fe(2+)(out)</text>
        <dbReference type="Rhea" id="RHEA:28486"/>
        <dbReference type="ChEBI" id="CHEBI:29033"/>
    </reaction>
</comment>
<comment type="cofactor">
    <cofactor evidence="1">
        <name>heme b</name>
        <dbReference type="ChEBI" id="CHEBI:60344"/>
    </cofactor>
    <text evidence="1">Binds 1 heme b (iron(II)-protoporphyrin IX) group per dimer.</text>
</comment>
<comment type="cofactor">
    <cofactor evidence="1">
        <name>Fe cation</name>
        <dbReference type="ChEBI" id="CHEBI:24875"/>
    </cofactor>
    <text evidence="1">Binds 2 iron ions per subunit. The catalytic dinuclear iron-binding site within each subunit is known as the ferroxidase center.</text>
</comment>
<comment type="subunit">
    <text evidence="1">Homooligomer of 24 subunits, arranged as 12 dimers, that are packed together to form an approximately spherical molecule with a central cavity, in which large amounts of iron can be deposited.</text>
</comment>
<comment type="similarity">
    <text evidence="4">Belongs to the bacterioferritin family.</text>
</comment>
<sequence>MKGDVKIINYLNKLLGNELVAINQYFLHARMFKNWGLTRLNDVEYHESIDEMKHADKYIERILFLEGIPNLQDLGKLGIGEDVEEMLRSDLRLELEGAKDLREAIAYADSVHDYVSRDMMIEILADEEGHIDWLETELDLIAKLGMQNYLQSQIKVTD</sequence>
<reference key="1">
    <citation type="submission" date="1998-04" db="EMBL/GenBank/DDBJ databases">
        <authorList>
            <person name="Noorani S.M."/>
            <person name="Lindahl L."/>
            <person name="Zengel J.M."/>
        </authorList>
    </citation>
    <scope>NUCLEOTIDE SEQUENCE [GENOMIC DNA]</scope>
    <source>
        <strain>LT2</strain>
    </source>
</reference>
<reference key="2">
    <citation type="journal article" date="2001" name="Nature">
        <title>Complete genome sequence of Salmonella enterica serovar Typhimurium LT2.</title>
        <authorList>
            <person name="McClelland M."/>
            <person name="Sanderson K.E."/>
            <person name="Spieth J."/>
            <person name="Clifton S.W."/>
            <person name="Latreille P."/>
            <person name="Courtney L."/>
            <person name="Porwollik S."/>
            <person name="Ali J."/>
            <person name="Dante M."/>
            <person name="Du F."/>
            <person name="Hou S."/>
            <person name="Layman D."/>
            <person name="Leonard S."/>
            <person name="Nguyen C."/>
            <person name="Scott K."/>
            <person name="Holmes A."/>
            <person name="Grewal N."/>
            <person name="Mulvaney E."/>
            <person name="Ryan E."/>
            <person name="Sun H."/>
            <person name="Florea L."/>
            <person name="Miller W."/>
            <person name="Stoneking T."/>
            <person name="Nhan M."/>
            <person name="Waterston R."/>
            <person name="Wilson R.K."/>
        </authorList>
    </citation>
    <scope>NUCLEOTIDE SEQUENCE [LARGE SCALE GENOMIC DNA]</scope>
    <source>
        <strain>LT2 / SGSC1412 / ATCC 700720</strain>
    </source>
</reference>
<organism>
    <name type="scientific">Salmonella typhimurium (strain LT2 / SGSC1412 / ATCC 700720)</name>
    <dbReference type="NCBI Taxonomy" id="99287"/>
    <lineage>
        <taxon>Bacteria</taxon>
        <taxon>Pseudomonadati</taxon>
        <taxon>Pseudomonadota</taxon>
        <taxon>Gammaproteobacteria</taxon>
        <taxon>Enterobacterales</taxon>
        <taxon>Enterobacteriaceae</taxon>
        <taxon>Salmonella</taxon>
    </lineage>
</organism>